<feature type="chain" id="PRO_0000133054" description="Uncharacterized 22.1 kDa protein">
    <location>
        <begin position="1"/>
        <end position="205"/>
    </location>
</feature>
<gene>
    <name type="ORF">ORF115</name>
</gene>
<keyword id="KW-1185">Reference proteome</keyword>
<proteinExistence type="predicted"/>
<organismHost>
    <name type="scientific">Orgyia pseudotsugata</name>
    <name type="common">Douglas-fir tussock moth</name>
    <dbReference type="NCBI Taxonomy" id="33414"/>
</organismHost>
<organism>
    <name type="scientific">Orgyia pseudotsugata multicapsid polyhedrosis virus</name>
    <name type="common">OpMNPV</name>
    <dbReference type="NCBI Taxonomy" id="262177"/>
    <lineage>
        <taxon>Viruses</taxon>
        <taxon>Viruses incertae sedis</taxon>
        <taxon>Naldaviricetes</taxon>
        <taxon>Lefavirales</taxon>
        <taxon>Baculoviridae</taxon>
        <taxon>Alphabaculovirus</taxon>
        <taxon>Alphabaculovirus orpseudotsugatae</taxon>
    </lineage>
</organism>
<dbReference type="EMBL" id="U75930">
    <property type="protein sequence ID" value="AAC59114.1"/>
    <property type="molecule type" value="Genomic_DNA"/>
</dbReference>
<dbReference type="RefSeq" id="NP_046271.1">
    <property type="nucleotide sequence ID" value="NC_001875.2"/>
</dbReference>
<dbReference type="KEGG" id="vg:912043"/>
<dbReference type="OrthoDB" id="9997at10239"/>
<dbReference type="Proteomes" id="UP000009248">
    <property type="component" value="Genome"/>
</dbReference>
<dbReference type="InterPro" id="IPR007703">
    <property type="entry name" value="PIF3"/>
</dbReference>
<dbReference type="Pfam" id="PF05006">
    <property type="entry name" value="PIF3"/>
    <property type="match status" value="1"/>
</dbReference>
<protein>
    <recommendedName>
        <fullName>Uncharacterized 22.1 kDa protein</fullName>
    </recommendedName>
</protein>
<accession>O10354</accession>
<name>Y115_NPVOP</name>
<sequence>MPTVWQLLFLLLVVAIVYVYALRFAQRFLQQDALARQHAAAAPLMHFAFQRARAVDCALNRLPCVTSQQCRDNCVIASAASDLTCDNGFCSATNILADAQAPGSAIECDPALGLLRVYAAGGDFVVSQTCVSTYRDLVDDTGAARPYLCDAGALRLELDTTPFSADACTCAAGYDKLMFRQTALARTVPVCIPTHAASLYRRVYG</sequence>
<reference key="1">
    <citation type="journal article" date="1997" name="Virology">
        <title>The sequence of the Orgyia pseudotsugata multinucleocapsid nuclear polyhedrosis virus genome.</title>
        <authorList>
            <person name="Ahrens C.H."/>
            <person name="Russell R.R."/>
            <person name="Funk C.J."/>
            <person name="Evans J."/>
            <person name="Harwood S."/>
            <person name="Rohrmann G.F."/>
        </authorList>
    </citation>
    <scope>NUCLEOTIDE SEQUENCE [LARGE SCALE GENOMIC DNA]</scope>
</reference>